<gene>
    <name type="primary">she9</name>
    <name type="ORF">ACLA_013610</name>
</gene>
<keyword id="KW-0175">Coiled coil</keyword>
<keyword id="KW-0472">Membrane</keyword>
<keyword id="KW-0496">Mitochondrion</keyword>
<keyword id="KW-0999">Mitochondrion inner membrane</keyword>
<keyword id="KW-1185">Reference proteome</keyword>
<keyword id="KW-0809">Transit peptide</keyword>
<keyword id="KW-0812">Transmembrane</keyword>
<keyword id="KW-1133">Transmembrane helix</keyword>
<accession>A1CB06</accession>
<dbReference type="EMBL" id="DS027049">
    <property type="protein sequence ID" value="EAW12924.1"/>
    <property type="molecule type" value="Genomic_DNA"/>
</dbReference>
<dbReference type="RefSeq" id="XP_001274350.1">
    <property type="nucleotide sequence ID" value="XM_001274349.1"/>
</dbReference>
<dbReference type="SMR" id="A1CB06"/>
<dbReference type="EnsemblFungi" id="EAW12924">
    <property type="protein sequence ID" value="EAW12924"/>
    <property type="gene ID" value="ACLA_013610"/>
</dbReference>
<dbReference type="GeneID" id="4706229"/>
<dbReference type="KEGG" id="act:ACLA_013610"/>
<dbReference type="VEuPathDB" id="FungiDB:ACLA_013610"/>
<dbReference type="eggNOG" id="ENOG502QQ1E">
    <property type="taxonomic scope" value="Eukaryota"/>
</dbReference>
<dbReference type="HOGENOM" id="CLU_025632_2_0_1"/>
<dbReference type="OMA" id="ERYMALI"/>
<dbReference type="OrthoDB" id="5595506at2759"/>
<dbReference type="Proteomes" id="UP000006701">
    <property type="component" value="Unassembled WGS sequence"/>
</dbReference>
<dbReference type="GO" id="GO:0005743">
    <property type="term" value="C:mitochondrial inner membrane"/>
    <property type="evidence" value="ECO:0007669"/>
    <property type="project" value="UniProtKB-SubCell"/>
</dbReference>
<dbReference type="GO" id="GO:0007007">
    <property type="term" value="P:inner mitochondrial membrane organization"/>
    <property type="evidence" value="ECO:0007669"/>
    <property type="project" value="TreeGrafter"/>
</dbReference>
<dbReference type="InterPro" id="IPR008839">
    <property type="entry name" value="MDM33_fungi"/>
</dbReference>
<dbReference type="PANTHER" id="PTHR31961">
    <property type="entry name" value="SENSITIVE TO HIGH EXPRESSION PROTEIN 9, MITOCHONDRIAL"/>
    <property type="match status" value="1"/>
</dbReference>
<dbReference type="PANTHER" id="PTHR31961:SF3">
    <property type="entry name" value="SENSITIVE TO HIGH EXPRESSION PROTEIN 9, MITOCHONDRIAL"/>
    <property type="match status" value="1"/>
</dbReference>
<dbReference type="Pfam" id="PF05546">
    <property type="entry name" value="She9_MDM33"/>
    <property type="match status" value="1"/>
</dbReference>
<sequence length="504" mass="56274">MQSMPLLLRQSLRSSANLTRTSRQVRPRFLPAAGPNIYAARDIRRSFSVCVQCQFRSQPTLYLSLEKDKSKDEPVAQQPNDMDPVTTSPHETPKAQPEAEGEHPSSAPAEQETVSRLEEEFKNEPASETTEKRGLPSYLEERRSKYSKQFTEMMDNLQSNVFVAGQRLNDLTGYSSIEALKKDIQVQEERLRTARLRVREAKDSYAAAINRRSASQREVNELLQRKHAWSPADLERFTHLYRNDHTNEVAEMETQEALSAAERESEEAAAQLSKSILSRYHEEQVWSDKIRRMSTWGTWGLMGVNVLLFLIFQIAVEPWRRKRLVKGFEEKVIEAIEKEKTLNHIEILHPQNTLSSTSPASQEEAAETSILTTSEPPAAADETATTTTATTTATTTSEISASEPETTPAAAPKADEPAPVLTLEATEEPAHKNAVTGLLDSCKSQLARIPPPPSAVESWRQTFHDLFSDRSISITQRDLTSVALQSAAAGAAIMGLVIALIRPR</sequence>
<feature type="transit peptide" description="Mitochondrion" evidence="2">
    <location>
        <begin position="1"/>
        <end status="unknown"/>
    </location>
</feature>
<feature type="chain" id="PRO_0000351047" description="Sensitive to high expression protein 9 homolog, mitochondrial">
    <location>
        <begin status="unknown"/>
        <end position="504"/>
    </location>
</feature>
<feature type="topological domain" description="Mitochondrial matrix" evidence="2">
    <location>
        <begin status="unknown"/>
        <end position="295"/>
    </location>
</feature>
<feature type="transmembrane region" description="Helical" evidence="2">
    <location>
        <begin position="296"/>
        <end position="316"/>
    </location>
</feature>
<feature type="topological domain" description="Mitochondrial intermembrane" evidence="2">
    <location>
        <begin position="317"/>
        <end position="480"/>
    </location>
</feature>
<feature type="transmembrane region" description="Helical" evidence="2">
    <location>
        <begin position="481"/>
        <end position="501"/>
    </location>
</feature>
<feature type="topological domain" description="Mitochondrial matrix" evidence="2">
    <location>
        <begin position="502"/>
        <end position="504"/>
    </location>
</feature>
<feature type="region of interest" description="Disordered" evidence="3">
    <location>
        <begin position="65"/>
        <end position="140"/>
    </location>
</feature>
<feature type="region of interest" description="Disordered" evidence="3">
    <location>
        <begin position="352"/>
        <end position="414"/>
    </location>
</feature>
<feature type="coiled-coil region" evidence="2">
    <location>
        <begin position="139"/>
        <end position="276"/>
    </location>
</feature>
<feature type="compositionally biased region" description="Basic and acidic residues" evidence="3">
    <location>
        <begin position="65"/>
        <end position="74"/>
    </location>
</feature>
<feature type="compositionally biased region" description="Polar residues" evidence="3">
    <location>
        <begin position="77"/>
        <end position="90"/>
    </location>
</feature>
<feature type="compositionally biased region" description="Basic and acidic residues" evidence="3">
    <location>
        <begin position="113"/>
        <end position="140"/>
    </location>
</feature>
<feature type="compositionally biased region" description="Polar residues" evidence="3">
    <location>
        <begin position="352"/>
        <end position="361"/>
    </location>
</feature>
<feature type="compositionally biased region" description="Low complexity" evidence="3">
    <location>
        <begin position="372"/>
        <end position="412"/>
    </location>
</feature>
<comment type="function">
    <text evidence="1">Required for the maintenance of the structure of the mitochondrial inner membrane. Involved in mitochondrial morphology. Causes growth arrest when highly overexpressed (By similarity).</text>
</comment>
<comment type="subunit">
    <text evidence="1">Homooligomer.</text>
</comment>
<comment type="subcellular location">
    <subcellularLocation>
        <location evidence="1">Mitochondrion inner membrane</location>
        <topology evidence="1">Multi-pass membrane protein</topology>
    </subcellularLocation>
</comment>
<comment type="similarity">
    <text evidence="4">Belongs to the SHE9 family.</text>
</comment>
<proteinExistence type="inferred from homology"/>
<organism>
    <name type="scientific">Aspergillus clavatus (strain ATCC 1007 / CBS 513.65 / DSM 816 / NCTC 3887 / NRRL 1 / QM 1276 / 107)</name>
    <dbReference type="NCBI Taxonomy" id="344612"/>
    <lineage>
        <taxon>Eukaryota</taxon>
        <taxon>Fungi</taxon>
        <taxon>Dikarya</taxon>
        <taxon>Ascomycota</taxon>
        <taxon>Pezizomycotina</taxon>
        <taxon>Eurotiomycetes</taxon>
        <taxon>Eurotiomycetidae</taxon>
        <taxon>Eurotiales</taxon>
        <taxon>Aspergillaceae</taxon>
        <taxon>Aspergillus</taxon>
        <taxon>Aspergillus subgen. Fumigati</taxon>
    </lineage>
</organism>
<evidence type="ECO:0000250" key="1"/>
<evidence type="ECO:0000255" key="2"/>
<evidence type="ECO:0000256" key="3">
    <source>
        <dbReference type="SAM" id="MobiDB-lite"/>
    </source>
</evidence>
<evidence type="ECO:0000305" key="4"/>
<protein>
    <recommendedName>
        <fullName>Sensitive to high expression protein 9 homolog, mitochondrial</fullName>
    </recommendedName>
</protein>
<name>SHE9_ASPCL</name>
<reference key="1">
    <citation type="journal article" date="2008" name="PLoS Genet.">
        <title>Genomic islands in the pathogenic filamentous fungus Aspergillus fumigatus.</title>
        <authorList>
            <person name="Fedorova N.D."/>
            <person name="Khaldi N."/>
            <person name="Joardar V.S."/>
            <person name="Maiti R."/>
            <person name="Amedeo P."/>
            <person name="Anderson M.J."/>
            <person name="Crabtree J."/>
            <person name="Silva J.C."/>
            <person name="Badger J.H."/>
            <person name="Albarraq A."/>
            <person name="Angiuoli S."/>
            <person name="Bussey H."/>
            <person name="Bowyer P."/>
            <person name="Cotty P.J."/>
            <person name="Dyer P.S."/>
            <person name="Egan A."/>
            <person name="Galens K."/>
            <person name="Fraser-Liggett C.M."/>
            <person name="Haas B.J."/>
            <person name="Inman J.M."/>
            <person name="Kent R."/>
            <person name="Lemieux S."/>
            <person name="Malavazi I."/>
            <person name="Orvis J."/>
            <person name="Roemer T."/>
            <person name="Ronning C.M."/>
            <person name="Sundaram J.P."/>
            <person name="Sutton G."/>
            <person name="Turner G."/>
            <person name="Venter J.C."/>
            <person name="White O.R."/>
            <person name="Whitty B.R."/>
            <person name="Youngman P."/>
            <person name="Wolfe K.H."/>
            <person name="Goldman G.H."/>
            <person name="Wortman J.R."/>
            <person name="Jiang B."/>
            <person name="Denning D.W."/>
            <person name="Nierman W.C."/>
        </authorList>
    </citation>
    <scope>NUCLEOTIDE SEQUENCE [LARGE SCALE GENOMIC DNA]</scope>
    <source>
        <strain>ATCC 1007 / CBS 513.65 / DSM 816 / NCTC 3887 / NRRL 1 / QM 1276 / 107</strain>
    </source>
</reference>